<organism>
    <name type="scientific">Shewanella piezotolerans (strain WP3 / JCM 13877)</name>
    <dbReference type="NCBI Taxonomy" id="225849"/>
    <lineage>
        <taxon>Bacteria</taxon>
        <taxon>Pseudomonadati</taxon>
        <taxon>Pseudomonadota</taxon>
        <taxon>Gammaproteobacteria</taxon>
        <taxon>Alteromonadales</taxon>
        <taxon>Shewanellaceae</taxon>
        <taxon>Shewanella</taxon>
    </lineage>
</organism>
<keyword id="KW-0488">Methylation</keyword>
<keyword id="KW-0687">Ribonucleoprotein</keyword>
<keyword id="KW-0689">Ribosomal protein</keyword>
<keyword id="KW-0694">RNA-binding</keyword>
<keyword id="KW-0699">rRNA-binding</keyword>
<keyword id="KW-0820">tRNA-binding</keyword>
<comment type="function">
    <text evidence="2">With S4 and S5 plays an important role in translational accuracy.</text>
</comment>
<comment type="function">
    <text evidence="2">Interacts with and stabilizes bases of the 16S rRNA that are involved in tRNA selection in the A site and with the mRNA backbone. Located at the interface of the 30S and 50S subunits, it traverses the body of the 30S subunit contacting proteins on the other side and probably holding the rRNA structure together. The combined cluster of proteins S8, S12 and S17 appears to hold together the shoulder and platform of the 30S subunit.</text>
</comment>
<comment type="subunit">
    <text evidence="2">Part of the 30S ribosomal subunit. Contacts proteins S8 and S17. May interact with IF1 in the 30S initiation complex.</text>
</comment>
<comment type="similarity">
    <text evidence="2">Belongs to the universal ribosomal protein uS12 family.</text>
</comment>
<feature type="chain" id="PRO_1000123517" description="Small ribosomal subunit protein uS12">
    <location>
        <begin position="1"/>
        <end position="124"/>
    </location>
</feature>
<feature type="modified residue" description="3-methylthioaspartic acid" evidence="1">
    <location>
        <position position="89"/>
    </location>
</feature>
<reference key="1">
    <citation type="journal article" date="2008" name="PLoS ONE">
        <title>Environmental adaptation: genomic analysis of the piezotolerant and psychrotolerant deep-sea iron reducing bacterium Shewanella piezotolerans WP3.</title>
        <authorList>
            <person name="Wang F."/>
            <person name="Wang J."/>
            <person name="Jian H."/>
            <person name="Zhang B."/>
            <person name="Li S."/>
            <person name="Wang F."/>
            <person name="Zeng X."/>
            <person name="Gao L."/>
            <person name="Bartlett D.H."/>
            <person name="Yu J."/>
            <person name="Hu S."/>
            <person name="Xiao X."/>
        </authorList>
    </citation>
    <scope>NUCLEOTIDE SEQUENCE [LARGE SCALE GENOMIC DNA]</scope>
    <source>
        <strain>WP3 / JCM 13877</strain>
    </source>
</reference>
<dbReference type="EMBL" id="CP000472">
    <property type="protein sequence ID" value="ACJ28761.1"/>
    <property type="molecule type" value="Genomic_DNA"/>
</dbReference>
<dbReference type="RefSeq" id="WP_012327264.1">
    <property type="nucleotide sequence ID" value="NC_011566.1"/>
</dbReference>
<dbReference type="SMR" id="B8CNC7"/>
<dbReference type="STRING" id="225849.swp_2005"/>
<dbReference type="KEGG" id="swp:swp_2005"/>
<dbReference type="eggNOG" id="COG0048">
    <property type="taxonomic scope" value="Bacteria"/>
</dbReference>
<dbReference type="HOGENOM" id="CLU_104295_1_2_6"/>
<dbReference type="OrthoDB" id="9802366at2"/>
<dbReference type="Proteomes" id="UP000000753">
    <property type="component" value="Chromosome"/>
</dbReference>
<dbReference type="GO" id="GO:0015935">
    <property type="term" value="C:small ribosomal subunit"/>
    <property type="evidence" value="ECO:0007669"/>
    <property type="project" value="InterPro"/>
</dbReference>
<dbReference type="GO" id="GO:0019843">
    <property type="term" value="F:rRNA binding"/>
    <property type="evidence" value="ECO:0007669"/>
    <property type="project" value="UniProtKB-UniRule"/>
</dbReference>
<dbReference type="GO" id="GO:0003735">
    <property type="term" value="F:structural constituent of ribosome"/>
    <property type="evidence" value="ECO:0007669"/>
    <property type="project" value="InterPro"/>
</dbReference>
<dbReference type="GO" id="GO:0000049">
    <property type="term" value="F:tRNA binding"/>
    <property type="evidence" value="ECO:0007669"/>
    <property type="project" value="UniProtKB-UniRule"/>
</dbReference>
<dbReference type="GO" id="GO:0006412">
    <property type="term" value="P:translation"/>
    <property type="evidence" value="ECO:0007669"/>
    <property type="project" value="UniProtKB-UniRule"/>
</dbReference>
<dbReference type="CDD" id="cd03368">
    <property type="entry name" value="Ribosomal_S12"/>
    <property type="match status" value="1"/>
</dbReference>
<dbReference type="FunFam" id="2.40.50.140:FF:000001">
    <property type="entry name" value="30S ribosomal protein S12"/>
    <property type="match status" value="1"/>
</dbReference>
<dbReference type="Gene3D" id="2.40.50.140">
    <property type="entry name" value="Nucleic acid-binding proteins"/>
    <property type="match status" value="1"/>
</dbReference>
<dbReference type="HAMAP" id="MF_00403_B">
    <property type="entry name" value="Ribosomal_uS12_B"/>
    <property type="match status" value="1"/>
</dbReference>
<dbReference type="InterPro" id="IPR012340">
    <property type="entry name" value="NA-bd_OB-fold"/>
</dbReference>
<dbReference type="InterPro" id="IPR006032">
    <property type="entry name" value="Ribosomal_uS12"/>
</dbReference>
<dbReference type="InterPro" id="IPR005679">
    <property type="entry name" value="Ribosomal_uS12_bac"/>
</dbReference>
<dbReference type="NCBIfam" id="TIGR00981">
    <property type="entry name" value="rpsL_bact"/>
    <property type="match status" value="1"/>
</dbReference>
<dbReference type="PANTHER" id="PTHR11652">
    <property type="entry name" value="30S RIBOSOMAL PROTEIN S12 FAMILY MEMBER"/>
    <property type="match status" value="1"/>
</dbReference>
<dbReference type="Pfam" id="PF00164">
    <property type="entry name" value="Ribosom_S12_S23"/>
    <property type="match status" value="1"/>
</dbReference>
<dbReference type="PIRSF" id="PIRSF002133">
    <property type="entry name" value="Ribosomal_S12/S23"/>
    <property type="match status" value="1"/>
</dbReference>
<dbReference type="PRINTS" id="PR01034">
    <property type="entry name" value="RIBOSOMALS12"/>
</dbReference>
<dbReference type="SUPFAM" id="SSF50249">
    <property type="entry name" value="Nucleic acid-binding proteins"/>
    <property type="match status" value="1"/>
</dbReference>
<dbReference type="PROSITE" id="PS00055">
    <property type="entry name" value="RIBOSOMAL_S12"/>
    <property type="match status" value="1"/>
</dbReference>
<evidence type="ECO:0000250" key="1"/>
<evidence type="ECO:0000255" key="2">
    <source>
        <dbReference type="HAMAP-Rule" id="MF_00403"/>
    </source>
</evidence>
<evidence type="ECO:0000305" key="3"/>
<name>RS12_SHEPW</name>
<gene>
    <name evidence="2" type="primary">rpsL</name>
    <name type="ordered locus">swp_2005</name>
</gene>
<protein>
    <recommendedName>
        <fullName evidence="2">Small ribosomal subunit protein uS12</fullName>
    </recommendedName>
    <alternativeName>
        <fullName evidence="3">30S ribosomal protein S12</fullName>
    </alternativeName>
</protein>
<accession>B8CNC7</accession>
<sequence>MATVNQLVRKPRAPKVDKTNVPALNACPQKRGVCTRVYTTTPKKPNSALRKVARVRLTNGFEVTSYIGGEGHNLQEHSVILIRGGRVKDLPGVRYHTVRGALDCAGVSERRQGRSKYGAKRPKS</sequence>
<proteinExistence type="inferred from homology"/>